<name>RS12_LIGS1</name>
<gene>
    <name evidence="2" type="primary">rpsL</name>
    <name type="ordered locus">LSL_0200</name>
</gene>
<dbReference type="EMBL" id="CP000233">
    <property type="protein sequence ID" value="ABD99015.1"/>
    <property type="molecule type" value="Genomic_DNA"/>
</dbReference>
<dbReference type="RefSeq" id="WP_003703807.1">
    <property type="nucleotide sequence ID" value="NC_007929.1"/>
</dbReference>
<dbReference type="RefSeq" id="YP_535098.1">
    <property type="nucleotide sequence ID" value="NC_007929.1"/>
</dbReference>
<dbReference type="SMR" id="Q1WVA2"/>
<dbReference type="STRING" id="362948.LSL_0200"/>
<dbReference type="GeneID" id="89464945"/>
<dbReference type="KEGG" id="lsl:LSL_0200"/>
<dbReference type="PATRIC" id="fig|362948.14.peg.277"/>
<dbReference type="HOGENOM" id="CLU_104295_1_2_9"/>
<dbReference type="OrthoDB" id="9802366at2"/>
<dbReference type="Proteomes" id="UP000006559">
    <property type="component" value="Chromosome"/>
</dbReference>
<dbReference type="GO" id="GO:0015935">
    <property type="term" value="C:small ribosomal subunit"/>
    <property type="evidence" value="ECO:0007669"/>
    <property type="project" value="InterPro"/>
</dbReference>
<dbReference type="GO" id="GO:0019843">
    <property type="term" value="F:rRNA binding"/>
    <property type="evidence" value="ECO:0007669"/>
    <property type="project" value="UniProtKB-UniRule"/>
</dbReference>
<dbReference type="GO" id="GO:0003735">
    <property type="term" value="F:structural constituent of ribosome"/>
    <property type="evidence" value="ECO:0007669"/>
    <property type="project" value="InterPro"/>
</dbReference>
<dbReference type="GO" id="GO:0000049">
    <property type="term" value="F:tRNA binding"/>
    <property type="evidence" value="ECO:0007669"/>
    <property type="project" value="UniProtKB-UniRule"/>
</dbReference>
<dbReference type="GO" id="GO:0006412">
    <property type="term" value="P:translation"/>
    <property type="evidence" value="ECO:0007669"/>
    <property type="project" value="UniProtKB-UniRule"/>
</dbReference>
<dbReference type="CDD" id="cd03368">
    <property type="entry name" value="Ribosomal_S12"/>
    <property type="match status" value="1"/>
</dbReference>
<dbReference type="FunFam" id="2.40.50.140:FF:000001">
    <property type="entry name" value="30S ribosomal protein S12"/>
    <property type="match status" value="1"/>
</dbReference>
<dbReference type="Gene3D" id="2.40.50.140">
    <property type="entry name" value="Nucleic acid-binding proteins"/>
    <property type="match status" value="1"/>
</dbReference>
<dbReference type="HAMAP" id="MF_00403_B">
    <property type="entry name" value="Ribosomal_uS12_B"/>
    <property type="match status" value="1"/>
</dbReference>
<dbReference type="InterPro" id="IPR012340">
    <property type="entry name" value="NA-bd_OB-fold"/>
</dbReference>
<dbReference type="InterPro" id="IPR006032">
    <property type="entry name" value="Ribosomal_uS12"/>
</dbReference>
<dbReference type="InterPro" id="IPR005679">
    <property type="entry name" value="Ribosomal_uS12_bac"/>
</dbReference>
<dbReference type="NCBIfam" id="TIGR00981">
    <property type="entry name" value="rpsL_bact"/>
    <property type="match status" value="1"/>
</dbReference>
<dbReference type="PANTHER" id="PTHR11652">
    <property type="entry name" value="30S RIBOSOMAL PROTEIN S12 FAMILY MEMBER"/>
    <property type="match status" value="1"/>
</dbReference>
<dbReference type="Pfam" id="PF00164">
    <property type="entry name" value="Ribosom_S12_S23"/>
    <property type="match status" value="1"/>
</dbReference>
<dbReference type="PIRSF" id="PIRSF002133">
    <property type="entry name" value="Ribosomal_S12/S23"/>
    <property type="match status" value="1"/>
</dbReference>
<dbReference type="PRINTS" id="PR01034">
    <property type="entry name" value="RIBOSOMALS12"/>
</dbReference>
<dbReference type="SUPFAM" id="SSF50249">
    <property type="entry name" value="Nucleic acid-binding proteins"/>
    <property type="match status" value="1"/>
</dbReference>
<dbReference type="PROSITE" id="PS00055">
    <property type="entry name" value="RIBOSOMAL_S12"/>
    <property type="match status" value="1"/>
</dbReference>
<sequence>MPTINQLIRKGRKSKGSKSNSPALNFGYNSYKKVQTNNSAPQKRGVATRVGTMTPKKPNSALRKYARVRLSNLIEVTAYIPGIGHNLQEHSVVLIRGGRVKDLPGVRYHIVRGALDTAGVEGRMQSRSKYGAKKPKK</sequence>
<protein>
    <recommendedName>
        <fullName evidence="2">Small ribosomal subunit protein uS12</fullName>
    </recommendedName>
    <alternativeName>
        <fullName evidence="4">30S ribosomal protein S12</fullName>
    </alternativeName>
</protein>
<reference key="1">
    <citation type="journal article" date="2006" name="Proc. Natl. Acad. Sci. U.S.A.">
        <title>Multireplicon genome architecture of Lactobacillus salivarius.</title>
        <authorList>
            <person name="Claesson M.J."/>
            <person name="Li Y."/>
            <person name="Leahy S."/>
            <person name="Canchaya C."/>
            <person name="van Pijkeren J.P."/>
            <person name="Cerdeno-Tarraga A.M."/>
            <person name="Parkhill J."/>
            <person name="Flynn S."/>
            <person name="O'Sullivan G.C."/>
            <person name="Collins J.K."/>
            <person name="Higgins D."/>
            <person name="Shanahan F."/>
            <person name="Fitzgerald G.F."/>
            <person name="van Sinderen D."/>
            <person name="O'Toole P.W."/>
        </authorList>
    </citation>
    <scope>NUCLEOTIDE SEQUENCE [LARGE SCALE GENOMIC DNA]</scope>
    <source>
        <strain>UCC118</strain>
    </source>
</reference>
<accession>Q1WVA2</accession>
<feature type="chain" id="PRO_0000263566" description="Small ribosomal subunit protein uS12">
    <location>
        <begin position="1"/>
        <end position="137"/>
    </location>
</feature>
<feature type="region of interest" description="Disordered" evidence="3">
    <location>
        <begin position="1"/>
        <end position="57"/>
    </location>
</feature>
<feature type="compositionally biased region" description="Polar residues" evidence="3">
    <location>
        <begin position="32"/>
        <end position="41"/>
    </location>
</feature>
<feature type="modified residue" description="3-methylthioaspartic acid" evidence="1">
    <location>
        <position position="102"/>
    </location>
</feature>
<comment type="function">
    <text evidence="2">With S4 and S5 plays an important role in translational accuracy.</text>
</comment>
<comment type="function">
    <text evidence="2">Interacts with and stabilizes bases of the 16S rRNA that are involved in tRNA selection in the A site and with the mRNA backbone. Located at the interface of the 30S and 50S subunits, it traverses the body of the 30S subunit contacting proteins on the other side and probably holding the rRNA structure together. The combined cluster of proteins S8, S12 and S17 appears to hold together the shoulder and platform of the 30S subunit.</text>
</comment>
<comment type="subunit">
    <text evidence="2">Part of the 30S ribosomal subunit. Contacts proteins S8 and S17. May interact with IF1 in the 30S initiation complex.</text>
</comment>
<comment type="similarity">
    <text evidence="2">Belongs to the universal ribosomal protein uS12 family.</text>
</comment>
<evidence type="ECO:0000250" key="1"/>
<evidence type="ECO:0000255" key="2">
    <source>
        <dbReference type="HAMAP-Rule" id="MF_00403"/>
    </source>
</evidence>
<evidence type="ECO:0000256" key="3">
    <source>
        <dbReference type="SAM" id="MobiDB-lite"/>
    </source>
</evidence>
<evidence type="ECO:0000305" key="4"/>
<keyword id="KW-0488">Methylation</keyword>
<keyword id="KW-1185">Reference proteome</keyword>
<keyword id="KW-0687">Ribonucleoprotein</keyword>
<keyword id="KW-0689">Ribosomal protein</keyword>
<keyword id="KW-0694">RNA-binding</keyword>
<keyword id="KW-0699">rRNA-binding</keyword>
<keyword id="KW-0820">tRNA-binding</keyword>
<proteinExistence type="inferred from homology"/>
<organism>
    <name type="scientific">Ligilactobacillus salivarius (strain UCC118)</name>
    <name type="common">Lactobacillus salivarius</name>
    <dbReference type="NCBI Taxonomy" id="362948"/>
    <lineage>
        <taxon>Bacteria</taxon>
        <taxon>Bacillati</taxon>
        <taxon>Bacillota</taxon>
        <taxon>Bacilli</taxon>
        <taxon>Lactobacillales</taxon>
        <taxon>Lactobacillaceae</taxon>
        <taxon>Ligilactobacillus</taxon>
    </lineage>
</organism>